<name>PUR9_BACC7</name>
<organism>
    <name type="scientific">Bacillus cereus (strain AH187)</name>
    <dbReference type="NCBI Taxonomy" id="405534"/>
    <lineage>
        <taxon>Bacteria</taxon>
        <taxon>Bacillati</taxon>
        <taxon>Bacillota</taxon>
        <taxon>Bacilli</taxon>
        <taxon>Bacillales</taxon>
        <taxon>Bacillaceae</taxon>
        <taxon>Bacillus</taxon>
        <taxon>Bacillus cereus group</taxon>
    </lineage>
</organism>
<accession>B7HS36</accession>
<protein>
    <recommendedName>
        <fullName evidence="1">Bifunctional purine biosynthesis protein PurH</fullName>
    </recommendedName>
    <domain>
        <recommendedName>
            <fullName evidence="1">Phosphoribosylaminoimidazolecarboxamide formyltransferase</fullName>
            <ecNumber evidence="1">2.1.2.3</ecNumber>
        </recommendedName>
        <alternativeName>
            <fullName evidence="1">AICAR transformylase</fullName>
        </alternativeName>
    </domain>
    <domain>
        <recommendedName>
            <fullName evidence="1">IMP cyclohydrolase</fullName>
            <ecNumber evidence="1">3.5.4.10</ecNumber>
        </recommendedName>
        <alternativeName>
            <fullName evidence="1">ATIC</fullName>
        </alternativeName>
        <alternativeName>
            <fullName evidence="1">IMP synthase</fullName>
        </alternativeName>
        <alternativeName>
            <fullName evidence="1">Inosinicase</fullName>
        </alternativeName>
    </domain>
</protein>
<gene>
    <name evidence="1" type="primary">purH</name>
    <name type="ordered locus">BCAH187_A0371</name>
</gene>
<evidence type="ECO:0000255" key="1">
    <source>
        <dbReference type="HAMAP-Rule" id="MF_00139"/>
    </source>
</evidence>
<evidence type="ECO:0000255" key="2">
    <source>
        <dbReference type="PROSITE-ProRule" id="PRU01202"/>
    </source>
</evidence>
<reference key="1">
    <citation type="submission" date="2008-10" db="EMBL/GenBank/DDBJ databases">
        <title>Genome sequence of Bacillus cereus AH187.</title>
        <authorList>
            <person name="Dodson R.J."/>
            <person name="Durkin A.S."/>
            <person name="Rosovitz M.J."/>
            <person name="Rasko D.A."/>
            <person name="Kolsto A.B."/>
            <person name="Okstad O.A."/>
            <person name="Ravel J."/>
            <person name="Sutton G."/>
        </authorList>
    </citation>
    <scope>NUCLEOTIDE SEQUENCE [LARGE SCALE GENOMIC DNA]</scope>
    <source>
        <strain>AH187</strain>
    </source>
</reference>
<feature type="chain" id="PRO_1000117867" description="Bifunctional purine biosynthesis protein PurH">
    <location>
        <begin position="1"/>
        <end position="511"/>
    </location>
</feature>
<feature type="domain" description="MGS-like" evidence="2">
    <location>
        <begin position="1"/>
        <end position="145"/>
    </location>
</feature>
<dbReference type="EC" id="2.1.2.3" evidence="1"/>
<dbReference type="EC" id="3.5.4.10" evidence="1"/>
<dbReference type="EMBL" id="CP001177">
    <property type="protein sequence ID" value="ACJ80890.1"/>
    <property type="molecule type" value="Genomic_DNA"/>
</dbReference>
<dbReference type="SMR" id="B7HS36"/>
<dbReference type="KEGG" id="bcr:BCAH187_A0371"/>
<dbReference type="HOGENOM" id="CLU_016316_5_2_9"/>
<dbReference type="UniPathway" id="UPA00074">
    <property type="reaction ID" value="UER00133"/>
</dbReference>
<dbReference type="UniPathway" id="UPA00074">
    <property type="reaction ID" value="UER00135"/>
</dbReference>
<dbReference type="Proteomes" id="UP000002214">
    <property type="component" value="Chromosome"/>
</dbReference>
<dbReference type="GO" id="GO:0005829">
    <property type="term" value="C:cytosol"/>
    <property type="evidence" value="ECO:0007669"/>
    <property type="project" value="TreeGrafter"/>
</dbReference>
<dbReference type="GO" id="GO:0003937">
    <property type="term" value="F:IMP cyclohydrolase activity"/>
    <property type="evidence" value="ECO:0007669"/>
    <property type="project" value="UniProtKB-UniRule"/>
</dbReference>
<dbReference type="GO" id="GO:0004643">
    <property type="term" value="F:phosphoribosylaminoimidazolecarboxamide formyltransferase activity"/>
    <property type="evidence" value="ECO:0007669"/>
    <property type="project" value="UniProtKB-UniRule"/>
</dbReference>
<dbReference type="GO" id="GO:0006189">
    <property type="term" value="P:'de novo' IMP biosynthetic process"/>
    <property type="evidence" value="ECO:0007669"/>
    <property type="project" value="UniProtKB-UniRule"/>
</dbReference>
<dbReference type="CDD" id="cd01421">
    <property type="entry name" value="IMPCH"/>
    <property type="match status" value="1"/>
</dbReference>
<dbReference type="FunFam" id="3.40.140.20:FF:000001">
    <property type="entry name" value="Bifunctional purine biosynthesis protein PurH"/>
    <property type="match status" value="1"/>
</dbReference>
<dbReference type="FunFam" id="3.40.140.20:FF:000002">
    <property type="entry name" value="Bifunctional purine biosynthesis protein PurH"/>
    <property type="match status" value="1"/>
</dbReference>
<dbReference type="FunFam" id="3.40.50.1380:FF:000001">
    <property type="entry name" value="Bifunctional purine biosynthesis protein PurH"/>
    <property type="match status" value="1"/>
</dbReference>
<dbReference type="Gene3D" id="3.40.140.20">
    <property type="match status" value="2"/>
</dbReference>
<dbReference type="Gene3D" id="3.40.50.1380">
    <property type="entry name" value="Methylglyoxal synthase-like domain"/>
    <property type="match status" value="1"/>
</dbReference>
<dbReference type="HAMAP" id="MF_00139">
    <property type="entry name" value="PurH"/>
    <property type="match status" value="1"/>
</dbReference>
<dbReference type="InterPro" id="IPR024051">
    <property type="entry name" value="AICAR_Tfase_dup_dom_sf"/>
</dbReference>
<dbReference type="InterPro" id="IPR016193">
    <property type="entry name" value="Cytidine_deaminase-like"/>
</dbReference>
<dbReference type="InterPro" id="IPR011607">
    <property type="entry name" value="MGS-like_dom"/>
</dbReference>
<dbReference type="InterPro" id="IPR036914">
    <property type="entry name" value="MGS-like_dom_sf"/>
</dbReference>
<dbReference type="InterPro" id="IPR002695">
    <property type="entry name" value="PurH-like"/>
</dbReference>
<dbReference type="NCBIfam" id="NF002049">
    <property type="entry name" value="PRK00881.1"/>
    <property type="match status" value="1"/>
</dbReference>
<dbReference type="NCBIfam" id="TIGR00355">
    <property type="entry name" value="purH"/>
    <property type="match status" value="1"/>
</dbReference>
<dbReference type="PANTHER" id="PTHR11692:SF0">
    <property type="entry name" value="BIFUNCTIONAL PURINE BIOSYNTHESIS PROTEIN ATIC"/>
    <property type="match status" value="1"/>
</dbReference>
<dbReference type="PANTHER" id="PTHR11692">
    <property type="entry name" value="BIFUNCTIONAL PURINE BIOSYNTHESIS PROTEIN PURH"/>
    <property type="match status" value="1"/>
</dbReference>
<dbReference type="Pfam" id="PF01808">
    <property type="entry name" value="AICARFT_IMPCHas"/>
    <property type="match status" value="1"/>
</dbReference>
<dbReference type="Pfam" id="PF02142">
    <property type="entry name" value="MGS"/>
    <property type="match status" value="1"/>
</dbReference>
<dbReference type="PIRSF" id="PIRSF000414">
    <property type="entry name" value="AICARFT_IMPCHas"/>
    <property type="match status" value="1"/>
</dbReference>
<dbReference type="SMART" id="SM00798">
    <property type="entry name" value="AICARFT_IMPCHas"/>
    <property type="match status" value="1"/>
</dbReference>
<dbReference type="SMART" id="SM00851">
    <property type="entry name" value="MGS"/>
    <property type="match status" value="1"/>
</dbReference>
<dbReference type="SUPFAM" id="SSF53927">
    <property type="entry name" value="Cytidine deaminase-like"/>
    <property type="match status" value="1"/>
</dbReference>
<dbReference type="SUPFAM" id="SSF52335">
    <property type="entry name" value="Methylglyoxal synthase-like"/>
    <property type="match status" value="1"/>
</dbReference>
<dbReference type="PROSITE" id="PS51855">
    <property type="entry name" value="MGS"/>
    <property type="match status" value="1"/>
</dbReference>
<proteinExistence type="inferred from homology"/>
<keyword id="KW-0378">Hydrolase</keyword>
<keyword id="KW-0511">Multifunctional enzyme</keyword>
<keyword id="KW-0658">Purine biosynthesis</keyword>
<keyword id="KW-0808">Transferase</keyword>
<comment type="catalytic activity">
    <reaction evidence="1">
        <text>(6R)-10-formyltetrahydrofolate + 5-amino-1-(5-phospho-beta-D-ribosyl)imidazole-4-carboxamide = 5-formamido-1-(5-phospho-D-ribosyl)imidazole-4-carboxamide + (6S)-5,6,7,8-tetrahydrofolate</text>
        <dbReference type="Rhea" id="RHEA:22192"/>
        <dbReference type="ChEBI" id="CHEBI:57453"/>
        <dbReference type="ChEBI" id="CHEBI:58467"/>
        <dbReference type="ChEBI" id="CHEBI:58475"/>
        <dbReference type="ChEBI" id="CHEBI:195366"/>
        <dbReference type="EC" id="2.1.2.3"/>
    </reaction>
</comment>
<comment type="catalytic activity">
    <reaction evidence="1">
        <text>IMP + H2O = 5-formamido-1-(5-phospho-D-ribosyl)imidazole-4-carboxamide</text>
        <dbReference type="Rhea" id="RHEA:18445"/>
        <dbReference type="ChEBI" id="CHEBI:15377"/>
        <dbReference type="ChEBI" id="CHEBI:58053"/>
        <dbReference type="ChEBI" id="CHEBI:58467"/>
        <dbReference type="EC" id="3.5.4.10"/>
    </reaction>
</comment>
<comment type="pathway">
    <text evidence="1">Purine metabolism; IMP biosynthesis via de novo pathway; 5-formamido-1-(5-phospho-D-ribosyl)imidazole-4-carboxamide from 5-amino-1-(5-phospho-D-ribosyl)imidazole-4-carboxamide (10-formyl THF route): step 1/1.</text>
</comment>
<comment type="pathway">
    <text evidence="1">Purine metabolism; IMP biosynthesis via de novo pathway; IMP from 5-formamido-1-(5-phospho-D-ribosyl)imidazole-4-carboxamide: step 1/1.</text>
</comment>
<comment type="domain">
    <text evidence="1">The IMP cyclohydrolase activity resides in the N-terminal region.</text>
</comment>
<comment type="similarity">
    <text evidence="1">Belongs to the PurH family.</text>
</comment>
<sequence>MKQRALVSVSDKTGVVEFVKGLLEQGIEVISTGGTKKLLEENGLQVIGISEVTGFPEIMDGRVKTLHPNIHGGLLAVRDNETHVAQMNELGIEPIDFVVVNLYPFKETIAKPDVTFADAIENIDIGGPTMIRSAAKNHKFVSVIVDPVDYDVVLAELEENGEVKEETKRKLAAKVFRHTAAYDALISNYLTEQMGEESPETLTVTFEKKQDLRYGENPHQKATFYKAPFAATSSVAYAEQLHGKELSYNNINDADAALSIVKEFTEPAVVAVKHMNPCGVGVGTDIHEAYTRAYEADPVSIFGGIIAANREIDKSTAEKLHEIFLEIIIAPSFSKEALEVLQSKKNLRLLTVNIEKSTSASKKLTSVQGGLLVQEEDTLSLDESTISIPTKREPSEQEWKDLKLAWKVVKHVKSNAIVLAKDDMTIGVGAGQMNRVGSAKIAITQAGEKAQGSALASDAFFPMPDTLEEAAKAGITAIIQPGGSIRDEDSIKVADTYGIAMVFTGVRHFKH</sequence>